<keyword id="KW-1185">Reference proteome</keyword>
<keyword id="KW-0687">Ribonucleoprotein</keyword>
<keyword id="KW-0689">Ribosomal protein</keyword>
<keyword id="KW-0694">RNA-binding</keyword>
<keyword id="KW-0699">rRNA-binding</keyword>
<protein>
    <recommendedName>
        <fullName evidence="1">Small ribosomal subunit protein bS6</fullName>
    </recommendedName>
    <alternativeName>
        <fullName evidence="3">30S ribosomal protein S6</fullName>
    </alternativeName>
</protein>
<sequence length="124" mass="14063">MSQQPYYETMYILRPDIPEEEVETHVTKYREMVTEAGAEVLDNQMRGKRRLAYPISNHKEGIYVQLSHNGNGQQVAVLEKAMRLSEDVIRYLTVKQEGPLPAPRIVPGSEPEPVQQQEAAAVEA</sequence>
<dbReference type="EMBL" id="BX548175">
    <property type="protein sequence ID" value="CAE22433.1"/>
    <property type="molecule type" value="Genomic_DNA"/>
</dbReference>
<dbReference type="RefSeq" id="WP_011131623.1">
    <property type="nucleotide sequence ID" value="NC_005071.1"/>
</dbReference>
<dbReference type="SMR" id="Q7V3T1"/>
<dbReference type="KEGG" id="pmt:PMT_2259"/>
<dbReference type="eggNOG" id="COG0360">
    <property type="taxonomic scope" value="Bacteria"/>
</dbReference>
<dbReference type="HOGENOM" id="CLU_113441_4_2_3"/>
<dbReference type="OrthoDB" id="9812702at2"/>
<dbReference type="Proteomes" id="UP000001423">
    <property type="component" value="Chromosome"/>
</dbReference>
<dbReference type="GO" id="GO:0005737">
    <property type="term" value="C:cytoplasm"/>
    <property type="evidence" value="ECO:0007669"/>
    <property type="project" value="UniProtKB-ARBA"/>
</dbReference>
<dbReference type="GO" id="GO:1990904">
    <property type="term" value="C:ribonucleoprotein complex"/>
    <property type="evidence" value="ECO:0007669"/>
    <property type="project" value="UniProtKB-KW"/>
</dbReference>
<dbReference type="GO" id="GO:0005840">
    <property type="term" value="C:ribosome"/>
    <property type="evidence" value="ECO:0007669"/>
    <property type="project" value="UniProtKB-KW"/>
</dbReference>
<dbReference type="GO" id="GO:0070181">
    <property type="term" value="F:small ribosomal subunit rRNA binding"/>
    <property type="evidence" value="ECO:0007669"/>
    <property type="project" value="TreeGrafter"/>
</dbReference>
<dbReference type="GO" id="GO:0003735">
    <property type="term" value="F:structural constituent of ribosome"/>
    <property type="evidence" value="ECO:0007669"/>
    <property type="project" value="InterPro"/>
</dbReference>
<dbReference type="GO" id="GO:0006412">
    <property type="term" value="P:translation"/>
    <property type="evidence" value="ECO:0007669"/>
    <property type="project" value="UniProtKB-UniRule"/>
</dbReference>
<dbReference type="CDD" id="cd15487">
    <property type="entry name" value="bS6_chloro_cyano"/>
    <property type="match status" value="1"/>
</dbReference>
<dbReference type="Gene3D" id="3.30.70.60">
    <property type="match status" value="1"/>
</dbReference>
<dbReference type="HAMAP" id="MF_00360">
    <property type="entry name" value="Ribosomal_bS6"/>
    <property type="match status" value="1"/>
</dbReference>
<dbReference type="InterPro" id="IPR000529">
    <property type="entry name" value="Ribosomal_bS6"/>
</dbReference>
<dbReference type="InterPro" id="IPR020815">
    <property type="entry name" value="Ribosomal_bS6_CS"/>
</dbReference>
<dbReference type="InterPro" id="IPR035980">
    <property type="entry name" value="Ribosomal_bS6_sf"/>
</dbReference>
<dbReference type="InterPro" id="IPR020814">
    <property type="entry name" value="Ribosomal_S6_plastid/chlpt"/>
</dbReference>
<dbReference type="InterPro" id="IPR014717">
    <property type="entry name" value="Transl_elong_EF1B/ribsomal_bS6"/>
</dbReference>
<dbReference type="NCBIfam" id="TIGR00166">
    <property type="entry name" value="S6"/>
    <property type="match status" value="1"/>
</dbReference>
<dbReference type="PANTHER" id="PTHR21011">
    <property type="entry name" value="MITOCHONDRIAL 28S RIBOSOMAL PROTEIN S6"/>
    <property type="match status" value="1"/>
</dbReference>
<dbReference type="PANTHER" id="PTHR21011:SF1">
    <property type="entry name" value="SMALL RIBOSOMAL SUBUNIT PROTEIN BS6M"/>
    <property type="match status" value="1"/>
</dbReference>
<dbReference type="Pfam" id="PF01250">
    <property type="entry name" value="Ribosomal_S6"/>
    <property type="match status" value="1"/>
</dbReference>
<dbReference type="SUPFAM" id="SSF54995">
    <property type="entry name" value="Ribosomal protein S6"/>
    <property type="match status" value="1"/>
</dbReference>
<dbReference type="PROSITE" id="PS01048">
    <property type="entry name" value="RIBOSOMAL_S6"/>
    <property type="match status" value="1"/>
</dbReference>
<feature type="chain" id="PRO_0000176817" description="Small ribosomal subunit protein bS6">
    <location>
        <begin position="1"/>
        <end position="124"/>
    </location>
</feature>
<feature type="region of interest" description="Disordered" evidence="2">
    <location>
        <begin position="99"/>
        <end position="124"/>
    </location>
</feature>
<feature type="compositionally biased region" description="Low complexity" evidence="2">
    <location>
        <begin position="111"/>
        <end position="124"/>
    </location>
</feature>
<proteinExistence type="inferred from homology"/>
<organism>
    <name type="scientific">Prochlorococcus marinus (strain MIT 9313)</name>
    <dbReference type="NCBI Taxonomy" id="74547"/>
    <lineage>
        <taxon>Bacteria</taxon>
        <taxon>Bacillati</taxon>
        <taxon>Cyanobacteriota</taxon>
        <taxon>Cyanophyceae</taxon>
        <taxon>Synechococcales</taxon>
        <taxon>Prochlorococcaceae</taxon>
        <taxon>Prochlorococcus</taxon>
    </lineage>
</organism>
<gene>
    <name evidence="1" type="primary">rpsF</name>
    <name evidence="1" type="synonym">rps6</name>
    <name type="ordered locus">PMT_2259</name>
</gene>
<comment type="function">
    <text evidence="1">Binds together with bS18 to 16S ribosomal RNA.</text>
</comment>
<comment type="similarity">
    <text evidence="1">Belongs to the bacterial ribosomal protein bS6 family.</text>
</comment>
<name>RS6_PROMM</name>
<reference key="1">
    <citation type="journal article" date="2003" name="Nature">
        <title>Genome divergence in two Prochlorococcus ecotypes reflects oceanic niche differentiation.</title>
        <authorList>
            <person name="Rocap G."/>
            <person name="Larimer F.W."/>
            <person name="Lamerdin J.E."/>
            <person name="Malfatti S."/>
            <person name="Chain P."/>
            <person name="Ahlgren N.A."/>
            <person name="Arellano A."/>
            <person name="Coleman M."/>
            <person name="Hauser L."/>
            <person name="Hess W.R."/>
            <person name="Johnson Z.I."/>
            <person name="Land M.L."/>
            <person name="Lindell D."/>
            <person name="Post A.F."/>
            <person name="Regala W."/>
            <person name="Shah M."/>
            <person name="Shaw S.L."/>
            <person name="Steglich C."/>
            <person name="Sullivan M.B."/>
            <person name="Ting C.S."/>
            <person name="Tolonen A."/>
            <person name="Webb E.A."/>
            <person name="Zinser E.R."/>
            <person name="Chisholm S.W."/>
        </authorList>
    </citation>
    <scope>NUCLEOTIDE SEQUENCE [LARGE SCALE GENOMIC DNA]</scope>
    <source>
        <strain>MIT 9313</strain>
    </source>
</reference>
<evidence type="ECO:0000255" key="1">
    <source>
        <dbReference type="HAMAP-Rule" id="MF_00360"/>
    </source>
</evidence>
<evidence type="ECO:0000256" key="2">
    <source>
        <dbReference type="SAM" id="MobiDB-lite"/>
    </source>
</evidence>
<evidence type="ECO:0000305" key="3"/>
<accession>Q7V3T1</accession>